<accession>O63852</accession>
<reference key="1">
    <citation type="journal article" date="1998" name="J. Mol. Evol.">
        <title>Mitochondrial DNA of the coral Sarcophyton glaucum contains a gene for a homologue of bacterial MutS: a possible case of gene transfer from the nucleus to the mitochondrion.</title>
        <authorList>
            <person name="Pont-Kingdon G."/>
            <person name="Okada N.A."/>
            <person name="Macfarlane J.L."/>
            <person name="Beagley C.T."/>
            <person name="Watkins-Sims C.D."/>
            <person name="Cavalier-Smith T."/>
            <person name="Clark-Walker G.D."/>
            <person name="Wolstenholme D.R."/>
        </authorList>
    </citation>
    <scope>NUCLEOTIDE SEQUENCE [GENOMIC DNA]</scope>
</reference>
<evidence type="ECO:0000255" key="1"/>
<evidence type="ECO:0000305" key="2"/>
<proteinExistence type="inferred from homology"/>
<protein>
    <recommendedName>
        <fullName>Mitochondrial DNA mismatch repair protein mutS homolog</fullName>
    </recommendedName>
</protein>
<name>MSHM_SARGL</name>
<comment type="function">
    <text>May be involved in DNA-mismatch repair.</text>
</comment>
<comment type="subcellular location">
    <subcellularLocation>
        <location>Mitochondrion</location>
    </subcellularLocation>
</comment>
<comment type="similarity">
    <text evidence="2">Belongs to the DNA mismatch repair MutS family.</text>
</comment>
<feature type="chain" id="PRO_0000115214" description="Mitochondrial DNA mismatch repair protein mutS homolog">
    <location>
        <begin position="1"/>
        <end position="982"/>
    </location>
</feature>
<feature type="domain" description="HNH">
    <location>
        <begin position="905"/>
        <end position="951"/>
    </location>
</feature>
<feature type="binding site" evidence="1">
    <location>
        <begin position="698"/>
        <end position="705"/>
    </location>
    <ligand>
        <name>ATP</name>
        <dbReference type="ChEBI" id="CHEBI:30616"/>
    </ligand>
</feature>
<sequence>MNQIPMQYFNLAKENYSKYGLSVIQLIQIGKFYELWHEPDTSSKQQAYSQAELLVESSIRSRSLEVTPPIEQVASLLDMKIISLGKRSLLQMGFPVYSLTTHLSTLLDKGWTVIVIDELVTNKSGPKQRAVSQVYSPSCNLEDCPELPYVLSIYFSQDDLLGITLFSAMNGHSIIFPVSWTDRDKVTRLLISYHIREIVIWADSGVCSNILINKIYNLLIGWNLFPSEPNAKIEAMGEILTNLPCYLSYRYENNSKEWLLLHIYIGINTEWLNKNYQKYTLSKIFQSTWTENVNQANLISLLGVLQFIKDRNPNLIKNLQLPECYNSVVSPLNLILCNRAEYQLDLLSKRGKLGGLLNLIDYCSTAMGKRLLKFRLLNPITDYSELNLRYKDISIFKRLLNQKIFDNSELKCIKDLSSLHRQWAICASSDTTLPPKKLSQIYHSYLFACQLISKLTNNIQLPPLVGPQLKSLIKEIERIFQVDSLLGDFKDVIQPIGNLPNLFEQRQTLRAQLTEWAEQISNIVFQDTTSIKAEYFNKEGYAFSISSKKLTKLEHYMMNTSISNNSIIVLGKRGSHHIITSPTIHKVSIELNELEEQINIYVKQTYHQELKRLYFSYSELFLPLVNMISRLDVALSGAITAIKFNYVEPCLTLAKTQQTKGFIEAANLRHPLVEQLNTQEECIAHNISLEDKGMLVFSVNGAGKSTLLRAIGVNVILAQAGMYVAADSFKLRPYNYLITRILGGDDLYRGQGTFEVEMRDLSTILQLANYNSLILGDEICHGTEVNSGTAILAATIERLINAQTSFVLSTHLHQVCSLIDSPVRYYHLSVIQQENSALIYERKLKPGPGPSQYGIEVMGHIINDKKFYNSALKYRKLINWEPPSQGELTVFRPSKYNAQVFIDSCEICGAPADAVHHIKPKSEHKKLCNRKLNRRSNLVPVCSSCHLDIHRNKISILGWKRTPKHKKLYWVYTNESLDSGTK</sequence>
<organism>
    <name type="scientific">Sarcophyton glaucum</name>
    <name type="common">Toadstool umbrella leather coral</name>
    <dbReference type="NCBI Taxonomy" id="70919"/>
    <lineage>
        <taxon>Eukaryota</taxon>
        <taxon>Metazoa</taxon>
        <taxon>Cnidaria</taxon>
        <taxon>Anthozoa</taxon>
        <taxon>Octocorallia</taxon>
        <taxon>Malacalcyonacea</taxon>
        <taxon>Alcyoniidae</taxon>
        <taxon>Sarcophyton</taxon>
    </lineage>
</organism>
<keyword id="KW-0067">ATP-binding</keyword>
<keyword id="KW-0227">DNA damage</keyword>
<keyword id="KW-0234">DNA repair</keyword>
<keyword id="KW-0238">DNA-binding</keyword>
<keyword id="KW-0496">Mitochondrion</keyword>
<keyword id="KW-0547">Nucleotide-binding</keyword>
<dbReference type="EMBL" id="AF063191">
    <property type="protein sequence ID" value="AAC16386.1"/>
    <property type="molecule type" value="Genomic_DNA"/>
</dbReference>
<dbReference type="PIR" id="S58881">
    <property type="entry name" value="S58881"/>
</dbReference>
<dbReference type="SMR" id="O63852"/>
<dbReference type="GO" id="GO:0005739">
    <property type="term" value="C:mitochondrion"/>
    <property type="evidence" value="ECO:0007669"/>
    <property type="project" value="UniProtKB-SubCell"/>
</dbReference>
<dbReference type="GO" id="GO:0005634">
    <property type="term" value="C:nucleus"/>
    <property type="evidence" value="ECO:0007669"/>
    <property type="project" value="TreeGrafter"/>
</dbReference>
<dbReference type="GO" id="GO:0005524">
    <property type="term" value="F:ATP binding"/>
    <property type="evidence" value="ECO:0007669"/>
    <property type="project" value="UniProtKB-KW"/>
</dbReference>
<dbReference type="GO" id="GO:0140664">
    <property type="term" value="F:ATP-dependent DNA damage sensor activity"/>
    <property type="evidence" value="ECO:0007669"/>
    <property type="project" value="InterPro"/>
</dbReference>
<dbReference type="GO" id="GO:0004519">
    <property type="term" value="F:endonuclease activity"/>
    <property type="evidence" value="ECO:0007669"/>
    <property type="project" value="InterPro"/>
</dbReference>
<dbReference type="GO" id="GO:0030983">
    <property type="term" value="F:mismatched DNA binding"/>
    <property type="evidence" value="ECO:0007669"/>
    <property type="project" value="InterPro"/>
</dbReference>
<dbReference type="GO" id="GO:0008270">
    <property type="term" value="F:zinc ion binding"/>
    <property type="evidence" value="ECO:0007669"/>
    <property type="project" value="InterPro"/>
</dbReference>
<dbReference type="GO" id="GO:0006298">
    <property type="term" value="P:mismatch repair"/>
    <property type="evidence" value="ECO:0007669"/>
    <property type="project" value="InterPro"/>
</dbReference>
<dbReference type="CDD" id="cd03283">
    <property type="entry name" value="ABC_MutS-like"/>
    <property type="match status" value="1"/>
</dbReference>
<dbReference type="CDD" id="cd00085">
    <property type="entry name" value="HNHc"/>
    <property type="match status" value="1"/>
</dbReference>
<dbReference type="Gene3D" id="1.10.1420.10">
    <property type="match status" value="2"/>
</dbReference>
<dbReference type="Gene3D" id="1.10.30.50">
    <property type="match status" value="1"/>
</dbReference>
<dbReference type="Gene3D" id="3.40.1170.10">
    <property type="entry name" value="DNA repair protein MutS, domain I"/>
    <property type="match status" value="1"/>
</dbReference>
<dbReference type="Gene3D" id="3.40.50.300">
    <property type="entry name" value="P-loop containing nucleotide triphosphate hydrolases"/>
    <property type="match status" value="1"/>
</dbReference>
<dbReference type="InterPro" id="IPR017261">
    <property type="entry name" value="DNA_mismatch_repair_MutS/MSH"/>
</dbReference>
<dbReference type="InterPro" id="IPR000432">
    <property type="entry name" value="DNA_mismatch_repair_MutS_C"/>
</dbReference>
<dbReference type="InterPro" id="IPR007696">
    <property type="entry name" value="DNA_mismatch_repair_MutS_core"/>
</dbReference>
<dbReference type="InterPro" id="IPR016151">
    <property type="entry name" value="DNA_mismatch_repair_MutS_N"/>
</dbReference>
<dbReference type="InterPro" id="IPR036187">
    <property type="entry name" value="DNA_mismatch_repair_MutS_sf"/>
</dbReference>
<dbReference type="InterPro" id="IPR002711">
    <property type="entry name" value="HNH"/>
</dbReference>
<dbReference type="InterPro" id="IPR003615">
    <property type="entry name" value="HNH_nuc"/>
</dbReference>
<dbReference type="InterPro" id="IPR045076">
    <property type="entry name" value="MutS"/>
</dbReference>
<dbReference type="InterPro" id="IPR027417">
    <property type="entry name" value="P-loop_NTPase"/>
</dbReference>
<dbReference type="PANTHER" id="PTHR11361:SF34">
    <property type="entry name" value="DNA MISMATCH REPAIR PROTEIN MSH1, MITOCHONDRIAL"/>
    <property type="match status" value="1"/>
</dbReference>
<dbReference type="PANTHER" id="PTHR11361">
    <property type="entry name" value="DNA MISMATCH REPAIR PROTEIN MUTS FAMILY MEMBER"/>
    <property type="match status" value="1"/>
</dbReference>
<dbReference type="Pfam" id="PF01844">
    <property type="entry name" value="HNH"/>
    <property type="match status" value="1"/>
</dbReference>
<dbReference type="Pfam" id="PF05192">
    <property type="entry name" value="MutS_III"/>
    <property type="match status" value="1"/>
</dbReference>
<dbReference type="Pfam" id="PF00488">
    <property type="entry name" value="MutS_V"/>
    <property type="match status" value="1"/>
</dbReference>
<dbReference type="PIRSF" id="PIRSF037677">
    <property type="entry name" value="DNA_mis_repair_Msh6"/>
    <property type="match status" value="1"/>
</dbReference>
<dbReference type="SMART" id="SM00507">
    <property type="entry name" value="HNHc"/>
    <property type="match status" value="1"/>
</dbReference>
<dbReference type="SMART" id="SM00534">
    <property type="entry name" value="MUTSac"/>
    <property type="match status" value="1"/>
</dbReference>
<dbReference type="SMART" id="SM00533">
    <property type="entry name" value="MUTSd"/>
    <property type="match status" value="1"/>
</dbReference>
<dbReference type="SUPFAM" id="SSF55271">
    <property type="entry name" value="DNA repair protein MutS, domain I"/>
    <property type="match status" value="1"/>
</dbReference>
<dbReference type="SUPFAM" id="SSF48334">
    <property type="entry name" value="DNA repair protein MutS, domain III"/>
    <property type="match status" value="1"/>
</dbReference>
<dbReference type="SUPFAM" id="SSF52540">
    <property type="entry name" value="P-loop containing nucleoside triphosphate hydrolases"/>
    <property type="match status" value="1"/>
</dbReference>
<dbReference type="PROSITE" id="PS00486">
    <property type="entry name" value="DNA_MISMATCH_REPAIR_2"/>
    <property type="match status" value="1"/>
</dbReference>
<geneLocation type="mitochondrion"/>